<accession>C0RWW9</accession>
<accession>A0A1D6GLC3</accession>
<feature type="chain" id="PRO_0000444504" description="Protein AMEIOTIC 1">
    <location>
        <begin position="1"/>
        <end position="780"/>
    </location>
</feature>
<feature type="region of interest" description="Disordered" evidence="2">
    <location>
        <begin position="32"/>
        <end position="60"/>
    </location>
</feature>
<feature type="region of interest" description="Disordered" evidence="2">
    <location>
        <begin position="237"/>
        <end position="327"/>
    </location>
</feature>
<feature type="coiled-coil region" evidence="1">
    <location>
        <begin position="448"/>
        <end position="547"/>
    </location>
</feature>
<feature type="compositionally biased region" description="Polar residues" evidence="2">
    <location>
        <begin position="50"/>
        <end position="60"/>
    </location>
</feature>
<feature type="compositionally biased region" description="Basic and acidic residues" evidence="2">
    <location>
        <begin position="263"/>
        <end position="291"/>
    </location>
</feature>
<feature type="compositionally biased region" description="Basic and acidic residues" evidence="2">
    <location>
        <begin position="309"/>
        <end position="327"/>
    </location>
</feature>
<sequence length="780" mass="85661">MDVETVQAGPALAAHLQLQASPKPQVKKYYFKKKTSSSHSRNGKDDVNHDSTIQPRSPLSRQSLTFDAIPTYHAGAFYEIDHDKLPPKSPIHLKSIRVVKVSECTNLDITVKFPSLQALRSFFSSYPAPGTGPELDERFVMSSNHAARILRRRVTEEELEGEVQQDSFWLIKPRLYDFAAPQQVPSRTLCLPPPPAPPAATLGLTADSCLLTTLKCDGAGWGMRRRVRYIGRHRDEAPKEASVDGYDTESSVREVQQPPATQEVKRSERNCKRKREAEASSKDNNGDEGKKNNKVQGASKKISKKAKKRTVESKDGDPRHGKDRWSAERYAAAEKSLLNIMRSRDARFGAPVMRQVLREEARKHIGDTGLLDHLLKHMAGRVPEGSVHRFRRRHNADGAMEYWLEPAELAEVRKQAGVSDPYWVPPPGWKPGDDVSLVAGDILVKRQVEELTEEVNGVKRQMEQLLCKDDGDFGAERDYSSLKEKYQRAVRANEKLEKQVLCLKDMCENVVQMNGELKKEVSAFKEKYEHIADKNDKLEEQVTYLSSSFLSFKDQLVVALKLELAPSEAVPRTALFVASGEQMTGTVIQGGQDRAERKSSFRVCKPQGKFLLPSMASGMTIGRGASSTCPAAATPGPGIPRSTSFPSMPGLPRSSRGPVEVVAAASGLDEHVMFGAHFSTPPSASSTNDAAKLQLSLPSPRSPLQPQKLFDTVTAAASGFSPQKLMHFSGLTRRDVDTSSSSSGACGSGLLEGKRVLFDADAGGISAVGTELALATPSYC</sequence>
<gene>
    <name evidence="4" type="primary">AM1</name>
    <name evidence="6" type="ORF">ZEAMMB73_Zm00001d013659</name>
</gene>
<reference key="1">
    <citation type="journal article" date="2009" name="Proc. Natl. Acad. Sci. U.S.A.">
        <title>Maize AMEIOTIC1 is essential for multiple early meiotic processes and likely required for the initiation of meiosis.</title>
        <authorList>
            <person name="Pawlowski W.P."/>
            <person name="Wang C.J."/>
            <person name="Golubovskaya I.N."/>
            <person name="Szymaniak J.M."/>
            <person name="Shi L."/>
            <person name="Hamant O."/>
            <person name="Zhu T."/>
            <person name="Harper L."/>
            <person name="Sheridan W.F."/>
            <person name="Cande W.Z."/>
        </authorList>
    </citation>
    <scope>NUCLEOTIDE SEQUENCE [MRNA]</scope>
    <scope>FUNCTION</scope>
    <scope>SUBCELLULAR LOCATION</scope>
    <scope>DISRUPTION PHENOTYPE</scope>
</reference>
<reference key="2">
    <citation type="journal article" date="2009" name="Science">
        <title>The B73 maize genome: complexity, diversity, and dynamics.</title>
        <authorList>
            <person name="Schnable P.S."/>
            <person name="Ware D."/>
            <person name="Fulton R.S."/>
            <person name="Stein J.C."/>
            <person name="Wei F."/>
            <person name="Pasternak S."/>
            <person name="Liang C."/>
            <person name="Zhang J."/>
            <person name="Fulton L."/>
            <person name="Graves T.A."/>
            <person name="Minx P."/>
            <person name="Reily A.D."/>
            <person name="Courtney L."/>
            <person name="Kruchowski S.S."/>
            <person name="Tomlinson C."/>
            <person name="Strong C."/>
            <person name="Delehaunty K."/>
            <person name="Fronick C."/>
            <person name="Courtney B."/>
            <person name="Rock S.M."/>
            <person name="Belter E."/>
            <person name="Du F."/>
            <person name="Kim K."/>
            <person name="Abbott R.M."/>
            <person name="Cotton M."/>
            <person name="Levy A."/>
            <person name="Marchetto P."/>
            <person name="Ochoa K."/>
            <person name="Jackson S.M."/>
            <person name="Gillam B."/>
            <person name="Chen W."/>
            <person name="Yan L."/>
            <person name="Higginbotham J."/>
            <person name="Cardenas M."/>
            <person name="Waligorski J."/>
            <person name="Applebaum E."/>
            <person name="Phelps L."/>
            <person name="Falcone J."/>
            <person name="Kanchi K."/>
            <person name="Thane T."/>
            <person name="Scimone A."/>
            <person name="Thane N."/>
            <person name="Henke J."/>
            <person name="Wang T."/>
            <person name="Ruppert J."/>
            <person name="Shah N."/>
            <person name="Rotter K."/>
            <person name="Hodges J."/>
            <person name="Ingenthron E."/>
            <person name="Cordes M."/>
            <person name="Kohlberg S."/>
            <person name="Sgro J."/>
            <person name="Delgado B."/>
            <person name="Mead K."/>
            <person name="Chinwalla A."/>
            <person name="Leonard S."/>
            <person name="Crouse K."/>
            <person name="Collura K."/>
            <person name="Kudrna D."/>
            <person name="Currie J."/>
            <person name="He R."/>
            <person name="Angelova A."/>
            <person name="Rajasekar S."/>
            <person name="Mueller T."/>
            <person name="Lomeli R."/>
            <person name="Scara G."/>
            <person name="Ko A."/>
            <person name="Delaney K."/>
            <person name="Wissotski M."/>
            <person name="Lopez G."/>
            <person name="Campos D."/>
            <person name="Braidotti M."/>
            <person name="Ashley E."/>
            <person name="Golser W."/>
            <person name="Kim H."/>
            <person name="Lee S."/>
            <person name="Lin J."/>
            <person name="Dujmic Z."/>
            <person name="Kim W."/>
            <person name="Talag J."/>
            <person name="Zuccolo A."/>
            <person name="Fan C."/>
            <person name="Sebastian A."/>
            <person name="Kramer M."/>
            <person name="Spiegel L."/>
            <person name="Nascimento L."/>
            <person name="Zutavern T."/>
            <person name="Miller B."/>
            <person name="Ambroise C."/>
            <person name="Muller S."/>
            <person name="Spooner W."/>
            <person name="Narechania A."/>
            <person name="Ren L."/>
            <person name="Wei S."/>
            <person name="Kumari S."/>
            <person name="Faga B."/>
            <person name="Levy M.J."/>
            <person name="McMahan L."/>
            <person name="Van Buren P."/>
            <person name="Vaughn M.W."/>
            <person name="Ying K."/>
            <person name="Yeh C.-T."/>
            <person name="Emrich S.J."/>
            <person name="Jia Y."/>
            <person name="Kalyanaraman A."/>
            <person name="Hsia A.-P."/>
            <person name="Barbazuk W.B."/>
            <person name="Baucom R.S."/>
            <person name="Brutnell T.P."/>
            <person name="Carpita N.C."/>
            <person name="Chaparro C."/>
            <person name="Chia J.-M."/>
            <person name="Deragon J.-M."/>
            <person name="Estill J.C."/>
            <person name="Fu Y."/>
            <person name="Jeddeloh J.A."/>
            <person name="Han Y."/>
            <person name="Lee H."/>
            <person name="Li P."/>
            <person name="Lisch D.R."/>
            <person name="Liu S."/>
            <person name="Liu Z."/>
            <person name="Nagel D.H."/>
            <person name="McCann M.C."/>
            <person name="SanMiguel P."/>
            <person name="Myers A.M."/>
            <person name="Nettleton D."/>
            <person name="Nguyen J."/>
            <person name="Penning B.W."/>
            <person name="Ponnala L."/>
            <person name="Schneider K.L."/>
            <person name="Schwartz D.C."/>
            <person name="Sharma A."/>
            <person name="Soderlund C."/>
            <person name="Springer N.M."/>
            <person name="Sun Q."/>
            <person name="Wang H."/>
            <person name="Waterman M."/>
            <person name="Westerman R."/>
            <person name="Wolfgruber T.K."/>
            <person name="Yang L."/>
            <person name="Yu Y."/>
            <person name="Zhang L."/>
            <person name="Zhou S."/>
            <person name="Zhu Q."/>
            <person name="Bennetzen J.L."/>
            <person name="Dawe R.K."/>
            <person name="Jiang J."/>
            <person name="Jiang N."/>
            <person name="Presting G.G."/>
            <person name="Wessler S.R."/>
            <person name="Aluru S."/>
            <person name="Martienssen R.A."/>
            <person name="Clifton S.W."/>
            <person name="McCombie W.R."/>
            <person name="Wing R.A."/>
            <person name="Wilson R.K."/>
        </authorList>
    </citation>
    <scope>NUCLEOTIDE SEQUENCE [LARGE SCALE GENOMIC DNA]</scope>
    <source>
        <strain>cv. B73</strain>
    </source>
</reference>
<keyword id="KW-0131">Cell cycle</keyword>
<keyword id="KW-0132">Cell division</keyword>
<keyword id="KW-0158">Chromosome</keyword>
<keyword id="KW-0159">Chromosome partition</keyword>
<keyword id="KW-0175">Coiled coil</keyword>
<keyword id="KW-0469">Meiosis</keyword>
<keyword id="KW-0539">Nucleus</keyword>
<keyword id="KW-1185">Reference proteome</keyword>
<evidence type="ECO:0000255" key="1"/>
<evidence type="ECO:0000256" key="2">
    <source>
        <dbReference type="SAM" id="MobiDB-lite"/>
    </source>
</evidence>
<evidence type="ECO:0000269" key="3">
    <source>
    </source>
</evidence>
<evidence type="ECO:0000303" key="4">
    <source>
    </source>
</evidence>
<evidence type="ECO:0000305" key="5"/>
<evidence type="ECO:0000312" key="6">
    <source>
        <dbReference type="EMBL" id="AQK64115.1"/>
    </source>
</evidence>
<protein>
    <recommendedName>
        <fullName evidence="4">Protein AMEIOTIC 1</fullName>
    </recommendedName>
</protein>
<dbReference type="EMBL" id="DQ663482">
    <property type="protein sequence ID" value="ABG57250.1"/>
    <property type="molecule type" value="mRNA"/>
</dbReference>
<dbReference type="EMBL" id="CM000781">
    <property type="protein sequence ID" value="AQK64115.1"/>
    <property type="status" value="ALT_SEQ"/>
    <property type="molecule type" value="Genomic_DNA"/>
</dbReference>
<dbReference type="RefSeq" id="NP_001139538.1">
    <property type="nucleotide sequence ID" value="NM_001146066.1"/>
</dbReference>
<dbReference type="SMR" id="C0RWW9"/>
<dbReference type="FunCoup" id="C0RWW9">
    <property type="interactions" value="1416"/>
</dbReference>
<dbReference type="STRING" id="4577.C0RWW9"/>
<dbReference type="PaxDb" id="4577-GRMZM5G883855_P01"/>
<dbReference type="GeneID" id="100271891"/>
<dbReference type="KEGG" id="zma:100271891"/>
<dbReference type="eggNOG" id="ENOG502QU2W">
    <property type="taxonomic scope" value="Eukaryota"/>
</dbReference>
<dbReference type="InParanoid" id="C0RWW9"/>
<dbReference type="OrthoDB" id="515863at2759"/>
<dbReference type="Proteomes" id="UP000007305">
    <property type="component" value="Unplaced"/>
</dbReference>
<dbReference type="ExpressionAtlas" id="C0RWW9">
    <property type="expression patterns" value="baseline and differential"/>
</dbReference>
<dbReference type="GO" id="GO:0005694">
    <property type="term" value="C:chromosome"/>
    <property type="evidence" value="ECO:0000314"/>
    <property type="project" value="UniProtKB"/>
</dbReference>
<dbReference type="GO" id="GO:0005634">
    <property type="term" value="C:nucleus"/>
    <property type="evidence" value="ECO:0000314"/>
    <property type="project" value="UniProtKB"/>
</dbReference>
<dbReference type="GO" id="GO:0051301">
    <property type="term" value="P:cell division"/>
    <property type="evidence" value="ECO:0007669"/>
    <property type="project" value="UniProtKB-KW"/>
</dbReference>
<dbReference type="GO" id="GO:0007059">
    <property type="term" value="P:chromosome segregation"/>
    <property type="evidence" value="ECO:0007669"/>
    <property type="project" value="UniProtKB-KW"/>
</dbReference>
<dbReference type="GO" id="GO:0051321">
    <property type="term" value="P:meiotic cell cycle"/>
    <property type="evidence" value="ECO:0000315"/>
    <property type="project" value="UniProtKB"/>
</dbReference>
<dbReference type="GO" id="GO:0051177">
    <property type="term" value="P:meiotic sister chromatid cohesion"/>
    <property type="evidence" value="ECO:0007669"/>
    <property type="project" value="InterPro"/>
</dbReference>
<dbReference type="GO" id="GO:0007131">
    <property type="term" value="P:reciprocal meiotic recombination"/>
    <property type="evidence" value="ECO:0007669"/>
    <property type="project" value="InterPro"/>
</dbReference>
<dbReference type="InterPro" id="IPR044221">
    <property type="entry name" value="DYAD/AMEIOTIC1"/>
</dbReference>
<dbReference type="PANTHER" id="PTHR46740">
    <property type="entry name" value="PROTEIN DYAD"/>
    <property type="match status" value="1"/>
</dbReference>
<dbReference type="PANTHER" id="PTHR46740:SF2">
    <property type="entry name" value="PROTEIN DYAD"/>
    <property type="match status" value="1"/>
</dbReference>
<organism>
    <name type="scientific">Zea mays</name>
    <name type="common">Maize</name>
    <dbReference type="NCBI Taxonomy" id="4577"/>
    <lineage>
        <taxon>Eukaryota</taxon>
        <taxon>Viridiplantae</taxon>
        <taxon>Streptophyta</taxon>
        <taxon>Embryophyta</taxon>
        <taxon>Tracheophyta</taxon>
        <taxon>Spermatophyta</taxon>
        <taxon>Magnoliopsida</taxon>
        <taxon>Liliopsida</taxon>
        <taxon>Poales</taxon>
        <taxon>Poaceae</taxon>
        <taxon>PACMAD clade</taxon>
        <taxon>Panicoideae</taxon>
        <taxon>Andropogonodae</taxon>
        <taxon>Andropogoneae</taxon>
        <taxon>Tripsacinae</taxon>
        <taxon>Zea</taxon>
    </lineage>
</organism>
<comment type="function">
    <text evidence="3">Plays a fundamental role in building the proper chromosome structure at the beginning of meiosis in male meiocytes. Required for the transition from leptotene to zygotene in meiocytes. Required for homologous chromosome pairing, and initiation and progression of meiotic recombination. Regulates meiocyte cytoskeleton organization.</text>
</comment>
<comment type="subcellular location">
    <subcellularLocation>
        <location evidence="3">Nucleus</location>
    </subcellularLocation>
    <subcellularLocation>
        <location evidence="3">Chromosome</location>
    </subcellularLocation>
    <text evidence="3">Diffuse localization in the nucleus during the initiation of meiosis. Binds to chromatin in early meiotic prophase I.</text>
</comment>
<comment type="disruption phenotype">
    <text evidence="3">Sterile phenotype due to male meiosis arrested at leptotene.</text>
</comment>
<comment type="sequence caution" evidence="5">
    <conflict type="erroneous gene model prediction">
        <sequence resource="EMBL-CDS" id="AQK64115"/>
    </conflict>
</comment>
<proteinExistence type="evidence at transcript level"/>
<name>AM1_MAIZE</name>